<evidence type="ECO:0000250" key="1"/>
<evidence type="ECO:0000255" key="2">
    <source>
        <dbReference type="PROSITE-ProRule" id="PRU01035"/>
    </source>
</evidence>
<evidence type="ECO:0000256" key="3">
    <source>
        <dbReference type="SAM" id="MobiDB-lite"/>
    </source>
</evidence>
<evidence type="ECO:0000305" key="4"/>
<feature type="chain" id="PRO_0000421090" description="Ubiquitin carboxyl-terminal hydrolase 17-like protein 15">
    <location>
        <begin position="1"/>
        <end position="553"/>
    </location>
</feature>
<feature type="domain" description="USP" evidence="2">
    <location>
        <begin position="80"/>
        <end position="375"/>
    </location>
</feature>
<feature type="region of interest" description="Disordered" evidence="3">
    <location>
        <begin position="382"/>
        <end position="413"/>
    </location>
</feature>
<feature type="region of interest" description="Disordered" evidence="3">
    <location>
        <begin position="491"/>
        <end position="524"/>
    </location>
</feature>
<feature type="compositionally biased region" description="Basic and acidic residues" evidence="3">
    <location>
        <begin position="382"/>
        <end position="392"/>
    </location>
</feature>
<feature type="compositionally biased region" description="Basic and acidic residues" evidence="3">
    <location>
        <begin position="398"/>
        <end position="413"/>
    </location>
</feature>
<feature type="compositionally biased region" description="Polar residues" evidence="3">
    <location>
        <begin position="496"/>
        <end position="505"/>
    </location>
</feature>
<feature type="compositionally biased region" description="Basic residues" evidence="3">
    <location>
        <begin position="510"/>
        <end position="524"/>
    </location>
</feature>
<feature type="active site" description="Nucleophile" evidence="2">
    <location>
        <position position="89"/>
    </location>
</feature>
<feature type="active site" description="Proton acceptor" evidence="2">
    <location>
        <position position="334"/>
    </location>
</feature>
<protein>
    <recommendedName>
        <fullName>Ubiquitin carboxyl-terminal hydrolase 17-like protein 15</fullName>
        <ecNumber>3.4.19.12</ecNumber>
    </recommendedName>
</protein>
<sequence>MEDDSLYLGGEWQFNHFSKLTSSRPDAAFAEIQRTSLPEKSPLSCETRVDLCDDLAPVARQLAPREKLPLSSRRPAAVGAGLQNMGNTCYVNASLQCLTYTPPLANYMLSREHSQTCHRHKGCMLCTMQAHITRALHNPGHVIQPSQALAAGFHRGKQEDAHEFLMFTVDAMKKACLPGHKQVDHHSKDTTLIHQIFGGYWRSQIKCLHCHGISDTFDPYLDIALDIQAAQSVQQALEQLVKPEELNGENAYHCGVCLQRAPASKTLTLHTSAKVLILVLKRFSDVTGNKIDKNVQYPECLDMKLYMSQTNSGPLVYVLYAVLVHAGWSCHNGHYFSYVKAQEGQWYKMDDAEVTASSITSVLSQQAYVLFYIQKSEWERHSESVSRGREPRALGAEDTDRRATQGELKRDHPCLQAPELDEHLVERATQESTLDHWKFLQEQNKTKPEFNVRKVEGTLPPDVLVIHQSKYKCGMKNHHPEQQSSLLNLSSTTPTHQESMNTGTLASLRGRARRSKGKNKHSKRALLVCQWSQWKYRPTRRGAHTHAHTQTHT</sequence>
<proteinExistence type="inferred from homology"/>
<reference key="1">
    <citation type="journal article" date="2005" name="Nature">
        <title>Generation and annotation of the DNA sequences of human chromosomes 2 and 4.</title>
        <authorList>
            <person name="Hillier L.W."/>
            <person name="Graves T.A."/>
            <person name="Fulton R.S."/>
            <person name="Fulton L.A."/>
            <person name="Pepin K.H."/>
            <person name="Minx P."/>
            <person name="Wagner-McPherson C."/>
            <person name="Layman D."/>
            <person name="Wylie K."/>
            <person name="Sekhon M."/>
            <person name="Becker M.C."/>
            <person name="Fewell G.A."/>
            <person name="Delehaunty K.D."/>
            <person name="Miner T.L."/>
            <person name="Nash W.E."/>
            <person name="Kremitzki C."/>
            <person name="Oddy L."/>
            <person name="Du H."/>
            <person name="Sun H."/>
            <person name="Bradshaw-Cordum H."/>
            <person name="Ali J."/>
            <person name="Carter J."/>
            <person name="Cordes M."/>
            <person name="Harris A."/>
            <person name="Isak A."/>
            <person name="van Brunt A."/>
            <person name="Nguyen C."/>
            <person name="Du F."/>
            <person name="Courtney L."/>
            <person name="Kalicki J."/>
            <person name="Ozersky P."/>
            <person name="Abbott S."/>
            <person name="Armstrong J."/>
            <person name="Belter E.A."/>
            <person name="Caruso L."/>
            <person name="Cedroni M."/>
            <person name="Cotton M."/>
            <person name="Davidson T."/>
            <person name="Desai A."/>
            <person name="Elliott G."/>
            <person name="Erb T."/>
            <person name="Fronick C."/>
            <person name="Gaige T."/>
            <person name="Haakenson W."/>
            <person name="Haglund K."/>
            <person name="Holmes A."/>
            <person name="Harkins R."/>
            <person name="Kim K."/>
            <person name="Kruchowski S.S."/>
            <person name="Strong C.M."/>
            <person name="Grewal N."/>
            <person name="Goyea E."/>
            <person name="Hou S."/>
            <person name="Levy A."/>
            <person name="Martinka S."/>
            <person name="Mead K."/>
            <person name="McLellan M.D."/>
            <person name="Meyer R."/>
            <person name="Randall-Maher J."/>
            <person name="Tomlinson C."/>
            <person name="Dauphin-Kohlberg S."/>
            <person name="Kozlowicz-Reilly A."/>
            <person name="Shah N."/>
            <person name="Swearengen-Shahid S."/>
            <person name="Snider J."/>
            <person name="Strong J.T."/>
            <person name="Thompson J."/>
            <person name="Yoakum M."/>
            <person name="Leonard S."/>
            <person name="Pearman C."/>
            <person name="Trani L."/>
            <person name="Radionenko M."/>
            <person name="Waligorski J.E."/>
            <person name="Wang C."/>
            <person name="Rock S.M."/>
            <person name="Tin-Wollam A.-M."/>
            <person name="Maupin R."/>
            <person name="Latreille P."/>
            <person name="Wendl M.C."/>
            <person name="Yang S.-P."/>
            <person name="Pohl C."/>
            <person name="Wallis J.W."/>
            <person name="Spieth J."/>
            <person name="Bieri T.A."/>
            <person name="Berkowicz N."/>
            <person name="Nelson J.O."/>
            <person name="Osborne J."/>
            <person name="Ding L."/>
            <person name="Meyer R."/>
            <person name="Sabo A."/>
            <person name="Shotland Y."/>
            <person name="Sinha P."/>
            <person name="Wohldmann P.E."/>
            <person name="Cook L.L."/>
            <person name="Hickenbotham M.T."/>
            <person name="Eldred J."/>
            <person name="Williams D."/>
            <person name="Jones T.A."/>
            <person name="She X."/>
            <person name="Ciccarelli F.D."/>
            <person name="Izaurralde E."/>
            <person name="Taylor J."/>
            <person name="Schmutz J."/>
            <person name="Myers R.M."/>
            <person name="Cox D.R."/>
            <person name="Huang X."/>
            <person name="McPherson J.D."/>
            <person name="Mardis E.R."/>
            <person name="Clifton S.W."/>
            <person name="Warren W.C."/>
            <person name="Chinwalla A.T."/>
            <person name="Eddy S.R."/>
            <person name="Marra M.A."/>
            <person name="Ovcharenko I."/>
            <person name="Furey T.S."/>
            <person name="Miller W."/>
            <person name="Eichler E.E."/>
            <person name="Bork P."/>
            <person name="Suyama M."/>
            <person name="Torrents D."/>
            <person name="Waterston R.H."/>
            <person name="Wilson R.K."/>
        </authorList>
    </citation>
    <scope>NUCLEOTIDE SEQUENCE [LARGE SCALE GENOMIC DNA]</scope>
</reference>
<name>U17LF_HUMAN</name>
<dbReference type="EC" id="3.4.19.12"/>
<dbReference type="EMBL" id="AC108519">
    <property type="status" value="NOT_ANNOTATED_CDS"/>
    <property type="molecule type" value="Genomic_DNA"/>
</dbReference>
<dbReference type="CCDS" id="CCDS77901.2"/>
<dbReference type="RefSeq" id="NP_001243823.2">
    <property type="nucleotide sequence ID" value="NM_001256894.2"/>
</dbReference>
<dbReference type="SMR" id="C9J2P7"/>
<dbReference type="FunCoup" id="C9J2P7">
    <property type="interactions" value="445"/>
</dbReference>
<dbReference type="IntAct" id="C9J2P7">
    <property type="interactions" value="1"/>
</dbReference>
<dbReference type="STRING" id="9606.ENSP00000483519"/>
<dbReference type="MEROPS" id="C19.A91"/>
<dbReference type="BioMuta" id="USP17L15"/>
<dbReference type="jPOST" id="C9J2P7"/>
<dbReference type="MassIVE" id="C9J2P7"/>
<dbReference type="PaxDb" id="9606-ENSP00000478980"/>
<dbReference type="Antibodypedia" id="77381">
    <property type="antibodies" value="3 antibodies from 1 providers"/>
</dbReference>
<dbReference type="Ensembl" id="ENST00000456464.2">
    <property type="protein sequence ID" value="ENSP00000410621.2"/>
    <property type="gene ID" value="ENSG00000223569.8"/>
</dbReference>
<dbReference type="GeneID" id="100288520"/>
<dbReference type="MANE-Select" id="ENST00000456464.2">
    <property type="protein sequence ID" value="ENSP00000410621.2"/>
    <property type="RefSeq nucleotide sequence ID" value="NM_001256894.2"/>
    <property type="RefSeq protein sequence ID" value="NP_001243823.2"/>
</dbReference>
<dbReference type="UCSC" id="uc062vcs.1">
    <property type="organism name" value="human"/>
</dbReference>
<dbReference type="AGR" id="HGNC:44443"/>
<dbReference type="GeneCards" id="USP17L15"/>
<dbReference type="HGNC" id="HGNC:44443">
    <property type="gene designation" value="USP17L15"/>
</dbReference>
<dbReference type="HPA" id="ENSG00000223569">
    <property type="expression patterns" value="Not detected"/>
</dbReference>
<dbReference type="neXtProt" id="NX_C9J2P7"/>
<dbReference type="VEuPathDB" id="HostDB:ENSG00000223569"/>
<dbReference type="eggNOG" id="KOG1865">
    <property type="taxonomic scope" value="Eukaryota"/>
</dbReference>
<dbReference type="GeneTree" id="ENSGT00940000161948"/>
<dbReference type="InParanoid" id="C9J2P7"/>
<dbReference type="OMA" id="FFCYMHS"/>
<dbReference type="PAN-GO" id="C9J2P7">
    <property type="GO annotations" value="6 GO annotations based on evolutionary models"/>
</dbReference>
<dbReference type="PhylomeDB" id="C9J2P7"/>
<dbReference type="TreeFam" id="TF315281"/>
<dbReference type="PathwayCommons" id="C9J2P7"/>
<dbReference type="Reactome" id="R-HSA-5689880">
    <property type="pathway name" value="Ub-specific processing proteases"/>
</dbReference>
<dbReference type="Pharos" id="C9J2P7">
    <property type="development level" value="Tdark"/>
</dbReference>
<dbReference type="PRO" id="PR:C9J2P7"/>
<dbReference type="Proteomes" id="UP000005640">
    <property type="component" value="Chromosome 4"/>
</dbReference>
<dbReference type="RNAct" id="C9J2P7">
    <property type="molecule type" value="protein"/>
</dbReference>
<dbReference type="Bgee" id="ENSG00000223569">
    <property type="expression patterns" value="Expressed in sural nerve and 52 other cell types or tissues"/>
</dbReference>
<dbReference type="GO" id="GO:0005829">
    <property type="term" value="C:cytosol"/>
    <property type="evidence" value="ECO:0000318"/>
    <property type="project" value="GO_Central"/>
</dbReference>
<dbReference type="GO" id="GO:0005783">
    <property type="term" value="C:endoplasmic reticulum"/>
    <property type="evidence" value="ECO:0007669"/>
    <property type="project" value="UniProtKB-SubCell"/>
</dbReference>
<dbReference type="GO" id="GO:0005634">
    <property type="term" value="C:nucleus"/>
    <property type="evidence" value="ECO:0000318"/>
    <property type="project" value="GO_Central"/>
</dbReference>
<dbReference type="GO" id="GO:0004843">
    <property type="term" value="F:cysteine-type deubiquitinase activity"/>
    <property type="evidence" value="ECO:0000318"/>
    <property type="project" value="GO_Central"/>
</dbReference>
<dbReference type="GO" id="GO:0016579">
    <property type="term" value="P:protein deubiquitination"/>
    <property type="evidence" value="ECO:0007669"/>
    <property type="project" value="InterPro"/>
</dbReference>
<dbReference type="GO" id="GO:0006508">
    <property type="term" value="P:proteolysis"/>
    <property type="evidence" value="ECO:0007669"/>
    <property type="project" value="UniProtKB-KW"/>
</dbReference>
<dbReference type="GO" id="GO:0042981">
    <property type="term" value="P:regulation of apoptotic process"/>
    <property type="evidence" value="ECO:0000318"/>
    <property type="project" value="GO_Central"/>
</dbReference>
<dbReference type="GO" id="GO:0031647">
    <property type="term" value="P:regulation of protein stability"/>
    <property type="evidence" value="ECO:0000318"/>
    <property type="project" value="GO_Central"/>
</dbReference>
<dbReference type="CDD" id="cd02661">
    <property type="entry name" value="Peptidase_C19E"/>
    <property type="match status" value="1"/>
</dbReference>
<dbReference type="FunFam" id="3.90.70.10:FF:000070">
    <property type="entry name" value="Ubiquitin carboxyl-terminal hydrolase 17-like protein 17"/>
    <property type="match status" value="1"/>
</dbReference>
<dbReference type="Gene3D" id="3.90.70.10">
    <property type="entry name" value="Cysteine proteinases"/>
    <property type="match status" value="1"/>
</dbReference>
<dbReference type="InterPro" id="IPR006861">
    <property type="entry name" value="HABP4_PAIRBP1-bd"/>
</dbReference>
<dbReference type="InterPro" id="IPR038765">
    <property type="entry name" value="Papain-like_cys_pep_sf"/>
</dbReference>
<dbReference type="InterPro" id="IPR050164">
    <property type="entry name" value="Peptidase_C19"/>
</dbReference>
<dbReference type="InterPro" id="IPR001394">
    <property type="entry name" value="Peptidase_C19_UCH"/>
</dbReference>
<dbReference type="InterPro" id="IPR018200">
    <property type="entry name" value="USP_CS"/>
</dbReference>
<dbReference type="InterPro" id="IPR028889">
    <property type="entry name" value="USP_dom"/>
</dbReference>
<dbReference type="PANTHER" id="PTHR24006:SF651">
    <property type="entry name" value="INACTIVE UBIQUITIN CARBOXYL-TERMINAL HYDROLASE 17-LIKE PROTEIN 4-RELATED"/>
    <property type="match status" value="1"/>
</dbReference>
<dbReference type="PANTHER" id="PTHR24006">
    <property type="entry name" value="UBIQUITIN CARBOXYL-TERMINAL HYDROLASE"/>
    <property type="match status" value="1"/>
</dbReference>
<dbReference type="Pfam" id="PF04774">
    <property type="entry name" value="HABP4_PAI-RBP1"/>
    <property type="match status" value="1"/>
</dbReference>
<dbReference type="Pfam" id="PF00443">
    <property type="entry name" value="UCH"/>
    <property type="match status" value="1"/>
</dbReference>
<dbReference type="SUPFAM" id="SSF54001">
    <property type="entry name" value="Cysteine proteinases"/>
    <property type="match status" value="1"/>
</dbReference>
<dbReference type="PROSITE" id="PS00972">
    <property type="entry name" value="USP_1"/>
    <property type="match status" value="1"/>
</dbReference>
<dbReference type="PROSITE" id="PS00973">
    <property type="entry name" value="USP_2"/>
    <property type="match status" value="1"/>
</dbReference>
<dbReference type="PROSITE" id="PS50235">
    <property type="entry name" value="USP_3"/>
    <property type="match status" value="1"/>
</dbReference>
<accession>C9J2P7</accession>
<comment type="function">
    <text evidence="1">Deubiquitinating enzyme that removes conjugated ubiquitin from specific proteins to regulate different cellular processes that may include cell proliferation, progression through the cell cycle, apoptosis, cell migration, and the cellular response to viral infection.</text>
</comment>
<comment type="catalytic activity">
    <reaction>
        <text>Thiol-dependent hydrolysis of ester, thioester, amide, peptide and isopeptide bonds formed by the C-terminal Gly of ubiquitin (a 76-residue protein attached to proteins as an intracellular targeting signal).</text>
        <dbReference type="EC" id="3.4.19.12"/>
    </reaction>
</comment>
<comment type="subcellular location">
    <subcellularLocation>
        <location evidence="1">Nucleus</location>
    </subcellularLocation>
    <subcellularLocation>
        <location evidence="1">Endoplasmic reticulum</location>
    </subcellularLocation>
</comment>
<comment type="similarity">
    <text evidence="4">Belongs to the peptidase C19 family. USP17 subfamily.</text>
</comment>
<comment type="caution">
    <text evidence="4">The RS447 megasatellite DNA is a highly polymorphic conserved tandem repetitive sequence which contains a copy of the USP17 gene. It is present with an interindividual variation in copy number, ranging from 20 to 103, and can be found in the genome on chromosome 4 and chromosome 8. The high similarity between the UPS17-like genes makes it impossible to specifically assign data to a particular gene of the family. Oligonucleotides designed in RNAi experiments are for instance not specific for a given UPS17-like gene.</text>
</comment>
<gene>
    <name type="primary">USP17L15</name>
</gene>
<keyword id="KW-0256">Endoplasmic reticulum</keyword>
<keyword id="KW-0378">Hydrolase</keyword>
<keyword id="KW-0539">Nucleus</keyword>
<keyword id="KW-0645">Protease</keyword>
<keyword id="KW-1185">Reference proteome</keyword>
<keyword id="KW-0788">Thiol protease</keyword>
<keyword id="KW-0833">Ubl conjugation pathway</keyword>
<organism>
    <name type="scientific">Homo sapiens</name>
    <name type="common">Human</name>
    <dbReference type="NCBI Taxonomy" id="9606"/>
    <lineage>
        <taxon>Eukaryota</taxon>
        <taxon>Metazoa</taxon>
        <taxon>Chordata</taxon>
        <taxon>Craniata</taxon>
        <taxon>Vertebrata</taxon>
        <taxon>Euteleostomi</taxon>
        <taxon>Mammalia</taxon>
        <taxon>Eutheria</taxon>
        <taxon>Euarchontoglires</taxon>
        <taxon>Primates</taxon>
        <taxon>Haplorrhini</taxon>
        <taxon>Catarrhini</taxon>
        <taxon>Hominidae</taxon>
        <taxon>Homo</taxon>
    </lineage>
</organism>